<organism>
    <name type="scientific">Pelodiscus sinensis japonicus</name>
    <name type="common">Chinese soft-shelled turtle</name>
    <dbReference type="NCBI Taxonomy" id="34908"/>
    <lineage>
        <taxon>Eukaryota</taxon>
        <taxon>Metazoa</taxon>
        <taxon>Chordata</taxon>
        <taxon>Craniata</taxon>
        <taxon>Vertebrata</taxon>
        <taxon>Euteleostomi</taxon>
        <taxon>Archelosauria</taxon>
        <taxon>Testudinata</taxon>
        <taxon>Testudines</taxon>
        <taxon>Cryptodira</taxon>
        <taxon>Trionychia</taxon>
        <taxon>Trionychidae</taxon>
        <taxon>Pelodiscus</taxon>
    </lineage>
</organism>
<name>LDHA_PELSJ</name>
<gene>
    <name type="primary">LDHA</name>
</gene>
<feature type="initiator methionine" description="Removed" evidence="1">
    <location>
        <position position="1"/>
    </location>
</feature>
<feature type="chain" id="PRO_0000168424" description="L-lactate dehydrogenase A chain">
    <location>
        <begin position="2"/>
        <end position="332"/>
    </location>
</feature>
<feature type="active site" description="Proton acceptor" evidence="1">
    <location>
        <position position="193"/>
    </location>
</feature>
<feature type="binding site" evidence="1">
    <location>
        <begin position="29"/>
        <end position="57"/>
    </location>
    <ligand>
        <name>NAD(+)</name>
        <dbReference type="ChEBI" id="CHEBI:57540"/>
    </ligand>
</feature>
<feature type="binding site" evidence="1">
    <location>
        <position position="99"/>
    </location>
    <ligand>
        <name>NAD(+)</name>
        <dbReference type="ChEBI" id="CHEBI:57540"/>
    </ligand>
</feature>
<feature type="binding site" evidence="1">
    <location>
        <position position="106"/>
    </location>
    <ligand>
        <name>substrate</name>
    </ligand>
</feature>
<feature type="binding site" evidence="1">
    <location>
        <position position="138"/>
    </location>
    <ligand>
        <name>NAD(+)</name>
        <dbReference type="ChEBI" id="CHEBI:57540"/>
    </ligand>
</feature>
<feature type="binding site" evidence="1">
    <location>
        <position position="138"/>
    </location>
    <ligand>
        <name>substrate</name>
    </ligand>
</feature>
<feature type="binding site" evidence="1">
    <location>
        <position position="169"/>
    </location>
    <ligand>
        <name>substrate</name>
    </ligand>
</feature>
<feature type="binding site" evidence="1">
    <location>
        <position position="248"/>
    </location>
    <ligand>
        <name>substrate</name>
    </ligand>
</feature>
<evidence type="ECO:0000250" key="1"/>
<evidence type="ECO:0000250" key="2">
    <source>
        <dbReference type="UniProtKB" id="P00338"/>
    </source>
</evidence>
<evidence type="ECO:0000305" key="3"/>
<keyword id="KW-0963">Cytoplasm</keyword>
<keyword id="KW-0520">NAD</keyword>
<keyword id="KW-0560">Oxidoreductase</keyword>
<dbReference type="EC" id="1.1.1.27" evidence="2"/>
<dbReference type="EMBL" id="AF363794">
    <property type="protein sequence ID" value="AAK37572.1"/>
    <property type="molecule type" value="mRNA"/>
</dbReference>
<dbReference type="SMR" id="Q98SL0"/>
<dbReference type="UniPathway" id="UPA00554">
    <property type="reaction ID" value="UER00611"/>
</dbReference>
<dbReference type="GO" id="GO:0005737">
    <property type="term" value="C:cytoplasm"/>
    <property type="evidence" value="ECO:0007669"/>
    <property type="project" value="UniProtKB-SubCell"/>
</dbReference>
<dbReference type="GO" id="GO:0004459">
    <property type="term" value="F:L-lactate dehydrogenase activity"/>
    <property type="evidence" value="ECO:0007669"/>
    <property type="project" value="UniProtKB-EC"/>
</dbReference>
<dbReference type="GO" id="GO:0006089">
    <property type="term" value="P:lactate metabolic process"/>
    <property type="evidence" value="ECO:0007669"/>
    <property type="project" value="TreeGrafter"/>
</dbReference>
<dbReference type="CDD" id="cd05293">
    <property type="entry name" value="LDH_1"/>
    <property type="match status" value="1"/>
</dbReference>
<dbReference type="FunFam" id="3.40.50.720:FF:000029">
    <property type="entry name" value="L-lactate dehydrogenase A chain"/>
    <property type="match status" value="1"/>
</dbReference>
<dbReference type="FunFam" id="3.90.110.10:FF:000003">
    <property type="entry name" value="L-lactate dehydrogenase A chain"/>
    <property type="match status" value="1"/>
</dbReference>
<dbReference type="Gene3D" id="3.90.110.10">
    <property type="entry name" value="Lactate dehydrogenase/glycoside hydrolase, family 4, C-terminal"/>
    <property type="match status" value="1"/>
</dbReference>
<dbReference type="Gene3D" id="3.40.50.720">
    <property type="entry name" value="NAD(P)-binding Rossmann-like Domain"/>
    <property type="match status" value="1"/>
</dbReference>
<dbReference type="HAMAP" id="MF_00488">
    <property type="entry name" value="Lactate_dehydrog"/>
    <property type="match status" value="1"/>
</dbReference>
<dbReference type="InterPro" id="IPR001557">
    <property type="entry name" value="L-lactate/malate_DH"/>
</dbReference>
<dbReference type="InterPro" id="IPR011304">
    <property type="entry name" value="L-lactate_DH"/>
</dbReference>
<dbReference type="InterPro" id="IPR018177">
    <property type="entry name" value="L-lactate_DH_AS"/>
</dbReference>
<dbReference type="InterPro" id="IPR022383">
    <property type="entry name" value="Lactate/malate_DH_C"/>
</dbReference>
<dbReference type="InterPro" id="IPR001236">
    <property type="entry name" value="Lactate/malate_DH_N"/>
</dbReference>
<dbReference type="InterPro" id="IPR015955">
    <property type="entry name" value="Lactate_DH/Glyco_Ohase_4_C"/>
</dbReference>
<dbReference type="InterPro" id="IPR036291">
    <property type="entry name" value="NAD(P)-bd_dom_sf"/>
</dbReference>
<dbReference type="NCBIfam" id="TIGR01771">
    <property type="entry name" value="L-LDH-NAD"/>
    <property type="match status" value="1"/>
</dbReference>
<dbReference type="NCBIfam" id="NF000824">
    <property type="entry name" value="PRK00066.1"/>
    <property type="match status" value="1"/>
</dbReference>
<dbReference type="PANTHER" id="PTHR43128">
    <property type="entry name" value="L-2-HYDROXYCARBOXYLATE DEHYDROGENASE (NAD(P)(+))"/>
    <property type="match status" value="1"/>
</dbReference>
<dbReference type="PANTHER" id="PTHR43128:SF10">
    <property type="entry name" value="L-LACTATE DEHYDROGENASE A CHAIN"/>
    <property type="match status" value="1"/>
</dbReference>
<dbReference type="Pfam" id="PF02866">
    <property type="entry name" value="Ldh_1_C"/>
    <property type="match status" value="1"/>
</dbReference>
<dbReference type="Pfam" id="PF00056">
    <property type="entry name" value="Ldh_1_N"/>
    <property type="match status" value="1"/>
</dbReference>
<dbReference type="PIRSF" id="PIRSF000102">
    <property type="entry name" value="Lac_mal_DH"/>
    <property type="match status" value="1"/>
</dbReference>
<dbReference type="PRINTS" id="PR00086">
    <property type="entry name" value="LLDHDRGNASE"/>
</dbReference>
<dbReference type="SUPFAM" id="SSF56327">
    <property type="entry name" value="LDH C-terminal domain-like"/>
    <property type="match status" value="1"/>
</dbReference>
<dbReference type="SUPFAM" id="SSF51735">
    <property type="entry name" value="NAD(P)-binding Rossmann-fold domains"/>
    <property type="match status" value="1"/>
</dbReference>
<dbReference type="PROSITE" id="PS00064">
    <property type="entry name" value="L_LDH"/>
    <property type="match status" value="1"/>
</dbReference>
<reference key="1">
    <citation type="journal article" date="2001" name="Gene">
        <title>Lactate dehydrogenase genes of caiman and Chinese soft-shelled turtle, with emphasis on the molecular phylogenetics and evolution of reptiles.</title>
        <authorList>
            <person name="Liao C.-H."/>
            <person name="Ho W.-Z."/>
            <person name="Huang H.-W."/>
            <person name="Kuo C.-H."/>
            <person name="Lee S.-C."/>
            <person name="Li S.S.-L."/>
        </authorList>
    </citation>
    <scope>NUCLEOTIDE SEQUENCE [MRNA]</scope>
    <source>
        <tissue>Muscle</tissue>
    </source>
</reference>
<sequence>MSVKELLIQNVHKEEHSHAHNKITVVGVGAVGMACAISILMKDLADELALVDVIEDKLRGEMLDLQHGSLFLRTPKIVSGKDYSVTAHSKLVIITAGARQQEGESRLNLVQRNVNIFKFIIPNVVKYSPDCMLLVVSNPVDILTYVAWKISGFPKHRVIGSGCNLDSARFRYLMGEKLGIHSLSCHGWIIGEHGDSSVPVWSGVNVAGVSLKALYPDLGTDADKEHWKEVHKQVVDSAYEVIKLKGYTSWAIGLSVADLAETVMKNLRRVHPISTMVKGMYGVSSDVFLSVPCVLGYAGITDVVKMTLKSEEEEKLRKSADTLWGIQKELQF</sequence>
<accession>Q98SL0</accession>
<comment type="function">
    <text evidence="2">Interconverts simultaneously and stereospecifically pyruvate and lactate with concomitant interconversion of NADH and NAD(+).</text>
</comment>
<comment type="catalytic activity">
    <reaction evidence="2">
        <text>(S)-lactate + NAD(+) = pyruvate + NADH + H(+)</text>
        <dbReference type="Rhea" id="RHEA:23444"/>
        <dbReference type="ChEBI" id="CHEBI:15361"/>
        <dbReference type="ChEBI" id="CHEBI:15378"/>
        <dbReference type="ChEBI" id="CHEBI:16651"/>
        <dbReference type="ChEBI" id="CHEBI:57540"/>
        <dbReference type="ChEBI" id="CHEBI:57945"/>
        <dbReference type="EC" id="1.1.1.27"/>
    </reaction>
    <physiologicalReaction direction="left-to-right" evidence="2">
        <dbReference type="Rhea" id="RHEA:23445"/>
    </physiologicalReaction>
    <physiologicalReaction direction="right-to-left" evidence="2">
        <dbReference type="Rhea" id="RHEA:23446"/>
    </physiologicalReaction>
</comment>
<comment type="pathway">
    <text evidence="2">Fermentation; pyruvate fermentation to lactate; (S)-lactate from pyruvate: step 1/1.</text>
</comment>
<comment type="subunit">
    <text evidence="1">Homotetramer.</text>
</comment>
<comment type="subcellular location">
    <subcellularLocation>
        <location evidence="1">Cytoplasm</location>
    </subcellularLocation>
</comment>
<comment type="similarity">
    <text evidence="3">Belongs to the LDH/MDH superfamily. LDH family.</text>
</comment>
<protein>
    <recommendedName>
        <fullName>L-lactate dehydrogenase A chain</fullName>
        <shortName>LDH-A</shortName>
        <ecNumber evidence="2">1.1.1.27</ecNumber>
    </recommendedName>
</protein>
<proteinExistence type="evidence at transcript level"/>